<sequence length="82" mass="9143">MDLSNRTVVQVVVLALVAQVTLSQHWSYGWLPGGKRSVGELEATIKMMDTGGVVALPEETSAHVSERLRPYDVILKKWMPHK</sequence>
<evidence type="ECO:0000250" key="1"/>
<evidence type="ECO:0000305" key="2"/>
<dbReference type="EMBL" id="X79709">
    <property type="protein sequence ID" value="CAA56148.1"/>
    <property type="molecule type" value="mRNA"/>
</dbReference>
<dbReference type="EMBL" id="X74957">
    <property type="protein sequence ID" value="CAA52912.1"/>
    <property type="molecule type" value="Genomic_DNA"/>
</dbReference>
<dbReference type="PIR" id="I51356">
    <property type="entry name" value="I51355"/>
</dbReference>
<dbReference type="RefSeq" id="NP_001117139.1">
    <property type="nucleotide sequence ID" value="NM_001123667.1"/>
</dbReference>
<dbReference type="RefSeq" id="XP_014009933.2">
    <property type="nucleotide sequence ID" value="XM_014154458.2"/>
</dbReference>
<dbReference type="RefSeq" id="XP_014009934.2">
    <property type="nucleotide sequence ID" value="XM_014154459.2"/>
</dbReference>
<dbReference type="STRING" id="8030.ENSSSAP00000116346"/>
<dbReference type="PaxDb" id="8030-ENSSSAP00000116346"/>
<dbReference type="Ensembl" id="ENSSSAT00000151527">
    <property type="protein sequence ID" value="ENSSSAP00000116346"/>
    <property type="gene ID" value="ENSSSAG00000080135"/>
</dbReference>
<dbReference type="Ensembl" id="ENSSSAT00020087172">
    <property type="protein sequence ID" value="ENSSSAP00020061067"/>
    <property type="gene ID" value="ENSSSAG00020042972"/>
</dbReference>
<dbReference type="Ensembl" id="ENSSSAT00070057400">
    <property type="protein sequence ID" value="ENSSSAP00070055072"/>
    <property type="gene ID" value="ENSSSAG00070035804"/>
</dbReference>
<dbReference type="Ensembl" id="ENSSSAT00075088274">
    <property type="protein sequence ID" value="ENSSSAP00075064176"/>
    <property type="gene ID" value="ENSSSAG00075042110"/>
</dbReference>
<dbReference type="GeneID" id="100136578"/>
<dbReference type="KEGG" id="sasa:100136578"/>
<dbReference type="CTD" id="360141"/>
<dbReference type="OMA" id="EATFRMM"/>
<dbReference type="OrthoDB" id="545927at7898"/>
<dbReference type="Proteomes" id="UP000087266">
    <property type="component" value="Chromosome ssa18"/>
</dbReference>
<dbReference type="GO" id="GO:0005615">
    <property type="term" value="C:extracellular space"/>
    <property type="evidence" value="ECO:0000250"/>
    <property type="project" value="UniProtKB"/>
</dbReference>
<dbReference type="GO" id="GO:0005183">
    <property type="term" value="F:gonadotropin hormone-releasing hormone activity"/>
    <property type="evidence" value="ECO:0007669"/>
    <property type="project" value="TreeGrafter"/>
</dbReference>
<dbReference type="GO" id="GO:0031530">
    <property type="term" value="F:gonadotropin-releasing hormone receptor binding"/>
    <property type="evidence" value="ECO:0007669"/>
    <property type="project" value="TreeGrafter"/>
</dbReference>
<dbReference type="InterPro" id="IPR002012">
    <property type="entry name" value="GnRH"/>
</dbReference>
<dbReference type="InterPro" id="IPR019792">
    <property type="entry name" value="Gonadoliberin"/>
</dbReference>
<dbReference type="PANTHER" id="PTHR10522">
    <property type="entry name" value="GONADOLIBERIN"/>
    <property type="match status" value="1"/>
</dbReference>
<dbReference type="PANTHER" id="PTHR10522:SF6">
    <property type="entry name" value="PROGONADOLIBERIN-2"/>
    <property type="match status" value="1"/>
</dbReference>
<dbReference type="Pfam" id="PF00446">
    <property type="entry name" value="GnRH"/>
    <property type="match status" value="1"/>
</dbReference>
<dbReference type="PROSITE" id="PS00473">
    <property type="entry name" value="GNRH"/>
    <property type="match status" value="1"/>
</dbReference>
<name>GON3_SALSA</name>
<reference key="1">
    <citation type="journal article" date="1992" name="Mol. Cell. Endocrinol.">
        <title>The Atlantic salmon prepro-gonadotropin releasing hormone gene and mRNA.</title>
        <authorList>
            <person name="Klungland H."/>
            <person name="Lorens J.B."/>
            <person name="Andersen O."/>
            <person name="Kisen G.O."/>
            <person name="Alestroem P."/>
        </authorList>
    </citation>
    <scope>NUCLEOTIDE SEQUENCE [GENOMIC DNA / MRNA]</scope>
    <source>
        <tissue>Hypothalamus</tissue>
    </source>
</reference>
<feature type="signal peptide" evidence="1">
    <location>
        <begin position="1"/>
        <end position="23"/>
    </location>
</feature>
<feature type="chain" id="PRO_0000012532" description="Progonadoliberin-3">
    <location>
        <begin position="24"/>
        <end position="82"/>
    </location>
</feature>
<feature type="peptide" id="PRO_0000012533" description="Gonadoliberin-3">
    <location>
        <begin position="24"/>
        <end position="33"/>
    </location>
</feature>
<feature type="peptide" id="PRO_0000012534" description="GnRH-associated peptide 3">
    <location>
        <begin position="37"/>
        <end position="82"/>
    </location>
</feature>
<feature type="modified residue" description="Pyrrolidone carboxylic acid" evidence="1">
    <location>
        <position position="24"/>
    </location>
</feature>
<feature type="modified residue" description="Glycine amide" evidence="1">
    <location>
        <position position="33"/>
    </location>
</feature>
<organism>
    <name type="scientific">Salmo salar</name>
    <name type="common">Atlantic salmon</name>
    <dbReference type="NCBI Taxonomy" id="8030"/>
    <lineage>
        <taxon>Eukaryota</taxon>
        <taxon>Metazoa</taxon>
        <taxon>Chordata</taxon>
        <taxon>Craniata</taxon>
        <taxon>Vertebrata</taxon>
        <taxon>Euteleostomi</taxon>
        <taxon>Actinopterygii</taxon>
        <taxon>Neopterygii</taxon>
        <taxon>Teleostei</taxon>
        <taxon>Protacanthopterygii</taxon>
        <taxon>Salmoniformes</taxon>
        <taxon>Salmonidae</taxon>
        <taxon>Salmoninae</taxon>
        <taxon>Salmo</taxon>
    </lineage>
</organism>
<comment type="function">
    <text>Stimulates the secretion of gonadotropins.</text>
</comment>
<comment type="subcellular location">
    <subcellularLocation>
        <location>Secreted</location>
    </subcellularLocation>
</comment>
<comment type="tissue specificity">
    <text>Brain.</text>
</comment>
<comment type="similarity">
    <text evidence="2">Belongs to the GnRH family.</text>
</comment>
<protein>
    <recommendedName>
        <fullName>Progonadoliberin-3</fullName>
    </recommendedName>
    <alternativeName>
        <fullName>Progonadoliberin III</fullName>
    </alternativeName>
    <component>
        <recommendedName>
            <fullName>Gonadoliberin-3</fullName>
        </recommendedName>
        <alternativeName>
            <fullName>Gonadoliberin III</fullName>
        </alternativeName>
        <alternativeName>
            <fullName>Gonadotropin-releasing hormone III</fullName>
            <shortName>GnRH III</shortName>
        </alternativeName>
        <alternativeName>
            <fullName>Luliberin III</fullName>
        </alternativeName>
        <alternativeName>
            <fullName>Luteinizing hormone-releasing hormone III</fullName>
            <shortName>LH-RH III</shortName>
        </alternativeName>
    </component>
    <component>
        <recommendedName>
            <fullName>GnRH-associated peptide 3</fullName>
        </recommendedName>
        <alternativeName>
            <fullName>GnRH-associated peptide III</fullName>
        </alternativeName>
    </component>
</protein>
<gene>
    <name type="primary">gnrh3</name>
</gene>
<keyword id="KW-0027">Amidation</keyword>
<keyword id="KW-0165">Cleavage on pair of basic residues</keyword>
<keyword id="KW-0372">Hormone</keyword>
<keyword id="KW-0873">Pyrrolidone carboxylic acid</keyword>
<keyword id="KW-1185">Reference proteome</keyword>
<keyword id="KW-0964">Secreted</keyword>
<keyword id="KW-0732">Signal</keyword>
<proteinExistence type="evidence at transcript level"/>
<accession>P69107</accession>
<accession>P35629</accession>
<accession>P51920</accession>